<protein>
    <recommendedName>
        <fullName evidence="1">Fluoride-specific ion channel FluC</fullName>
    </recommendedName>
</protein>
<proteinExistence type="inferred from homology"/>
<evidence type="ECO:0000255" key="1">
    <source>
        <dbReference type="HAMAP-Rule" id="MF_00454"/>
    </source>
</evidence>
<dbReference type="EMBL" id="CP000109">
    <property type="protein sequence ID" value="ABB41363.1"/>
    <property type="molecule type" value="Genomic_DNA"/>
</dbReference>
<dbReference type="SMR" id="Q31HL0"/>
<dbReference type="STRING" id="317025.Tcr_0767"/>
<dbReference type="KEGG" id="tcx:Tcr_0767"/>
<dbReference type="eggNOG" id="COG0239">
    <property type="taxonomic scope" value="Bacteria"/>
</dbReference>
<dbReference type="HOGENOM" id="CLU_114342_2_3_6"/>
<dbReference type="OrthoDB" id="9806299at2"/>
<dbReference type="GO" id="GO:0005886">
    <property type="term" value="C:plasma membrane"/>
    <property type="evidence" value="ECO:0007669"/>
    <property type="project" value="UniProtKB-SubCell"/>
</dbReference>
<dbReference type="GO" id="GO:0062054">
    <property type="term" value="F:fluoride channel activity"/>
    <property type="evidence" value="ECO:0007669"/>
    <property type="project" value="UniProtKB-UniRule"/>
</dbReference>
<dbReference type="GO" id="GO:0046872">
    <property type="term" value="F:metal ion binding"/>
    <property type="evidence" value="ECO:0007669"/>
    <property type="project" value="UniProtKB-KW"/>
</dbReference>
<dbReference type="GO" id="GO:0140114">
    <property type="term" value="P:cellular detoxification of fluoride"/>
    <property type="evidence" value="ECO:0007669"/>
    <property type="project" value="UniProtKB-UniRule"/>
</dbReference>
<dbReference type="HAMAP" id="MF_00454">
    <property type="entry name" value="FluC"/>
    <property type="match status" value="1"/>
</dbReference>
<dbReference type="InterPro" id="IPR003691">
    <property type="entry name" value="FluC"/>
</dbReference>
<dbReference type="NCBIfam" id="TIGR00494">
    <property type="entry name" value="crcB"/>
    <property type="match status" value="1"/>
</dbReference>
<dbReference type="PANTHER" id="PTHR28259">
    <property type="entry name" value="FLUORIDE EXPORT PROTEIN 1-RELATED"/>
    <property type="match status" value="1"/>
</dbReference>
<dbReference type="PANTHER" id="PTHR28259:SF1">
    <property type="entry name" value="FLUORIDE EXPORT PROTEIN 1-RELATED"/>
    <property type="match status" value="1"/>
</dbReference>
<dbReference type="Pfam" id="PF02537">
    <property type="entry name" value="CRCB"/>
    <property type="match status" value="1"/>
</dbReference>
<comment type="function">
    <text evidence="1">Fluoride-specific ion channel. Important for reducing fluoride concentration in the cell, thus reducing its toxicity.</text>
</comment>
<comment type="catalytic activity">
    <reaction evidence="1">
        <text>fluoride(in) = fluoride(out)</text>
        <dbReference type="Rhea" id="RHEA:76159"/>
        <dbReference type="ChEBI" id="CHEBI:17051"/>
    </reaction>
    <physiologicalReaction direction="left-to-right" evidence="1">
        <dbReference type="Rhea" id="RHEA:76160"/>
    </physiologicalReaction>
</comment>
<comment type="activity regulation">
    <text evidence="1">Na(+) is not transported, but it plays an essential structural role and its presence is essential for fluoride channel function.</text>
</comment>
<comment type="subcellular location">
    <subcellularLocation>
        <location evidence="1">Cell inner membrane</location>
        <topology evidence="1">Multi-pass membrane protein</topology>
    </subcellularLocation>
</comment>
<comment type="similarity">
    <text evidence="1">Belongs to the fluoride channel Fluc/FEX (TC 1.A.43) family.</text>
</comment>
<accession>Q31HL0</accession>
<sequence>MQSFHVLQLIAVGFGGALGAMARFIVSNQVYAWWGRDFAWGTLVVNSLGSFAIGLIMILMIDKFHASVEMRSFLIVGFLGAFTTFSTFSFETYSFLQTGEITKAMLNIGVSVLTGLFAVWLGIWTGKQFFSP</sequence>
<keyword id="KW-0997">Cell inner membrane</keyword>
<keyword id="KW-1003">Cell membrane</keyword>
<keyword id="KW-0407">Ion channel</keyword>
<keyword id="KW-0406">Ion transport</keyword>
<keyword id="KW-0472">Membrane</keyword>
<keyword id="KW-0479">Metal-binding</keyword>
<keyword id="KW-0915">Sodium</keyword>
<keyword id="KW-0812">Transmembrane</keyword>
<keyword id="KW-1133">Transmembrane helix</keyword>
<keyword id="KW-0813">Transport</keyword>
<name>FLUC_HYDCU</name>
<reference key="1">
    <citation type="journal article" date="2006" name="PLoS Biol.">
        <title>The genome of deep-sea vent chemolithoautotroph Thiomicrospira crunogena XCL-2.</title>
        <authorList>
            <person name="Scott K.M."/>
            <person name="Sievert S.M."/>
            <person name="Abril F.N."/>
            <person name="Ball L.A."/>
            <person name="Barrett C.J."/>
            <person name="Blake R.A."/>
            <person name="Boller A.J."/>
            <person name="Chain P.S.G."/>
            <person name="Clark J.A."/>
            <person name="Davis C.R."/>
            <person name="Detter C."/>
            <person name="Do K.F."/>
            <person name="Dobrinski K.P."/>
            <person name="Faza B.I."/>
            <person name="Fitzpatrick K.A."/>
            <person name="Freyermuth S.K."/>
            <person name="Harmer T.L."/>
            <person name="Hauser L.J."/>
            <person name="Huegler M."/>
            <person name="Kerfeld C.A."/>
            <person name="Klotz M.G."/>
            <person name="Kong W.W."/>
            <person name="Land M."/>
            <person name="Lapidus A."/>
            <person name="Larimer F.W."/>
            <person name="Longo D.L."/>
            <person name="Lucas S."/>
            <person name="Malfatti S.A."/>
            <person name="Massey S.E."/>
            <person name="Martin D.D."/>
            <person name="McCuddin Z."/>
            <person name="Meyer F."/>
            <person name="Moore J.L."/>
            <person name="Ocampo L.H. Jr."/>
            <person name="Paul J.H."/>
            <person name="Paulsen I.T."/>
            <person name="Reep D.K."/>
            <person name="Ren Q."/>
            <person name="Ross R.L."/>
            <person name="Sato P.Y."/>
            <person name="Thomas P."/>
            <person name="Tinkham L.E."/>
            <person name="Zeruth G.T."/>
        </authorList>
    </citation>
    <scope>NUCLEOTIDE SEQUENCE [LARGE SCALE GENOMIC DNA]</scope>
    <source>
        <strain>DSM 25203 / XCL-2</strain>
    </source>
</reference>
<organism>
    <name type="scientific">Hydrogenovibrio crunogenus (strain DSM 25203 / XCL-2)</name>
    <name type="common">Thiomicrospira crunogena</name>
    <dbReference type="NCBI Taxonomy" id="317025"/>
    <lineage>
        <taxon>Bacteria</taxon>
        <taxon>Pseudomonadati</taxon>
        <taxon>Pseudomonadota</taxon>
        <taxon>Gammaproteobacteria</taxon>
        <taxon>Thiotrichales</taxon>
        <taxon>Piscirickettsiaceae</taxon>
        <taxon>Hydrogenovibrio</taxon>
    </lineage>
</organism>
<feature type="chain" id="PRO_0000252958" description="Fluoride-specific ion channel FluC">
    <location>
        <begin position="1"/>
        <end position="132"/>
    </location>
</feature>
<feature type="transmembrane region" description="Helical" evidence="1">
    <location>
        <begin position="6"/>
        <end position="26"/>
    </location>
</feature>
<feature type="transmembrane region" description="Helical" evidence="1">
    <location>
        <begin position="41"/>
        <end position="61"/>
    </location>
</feature>
<feature type="transmembrane region" description="Helical" evidence="1">
    <location>
        <begin position="73"/>
        <end position="93"/>
    </location>
</feature>
<feature type="transmembrane region" description="Helical" evidence="1">
    <location>
        <begin position="104"/>
        <end position="124"/>
    </location>
</feature>
<feature type="binding site" evidence="1">
    <location>
        <position position="80"/>
    </location>
    <ligand>
        <name>Na(+)</name>
        <dbReference type="ChEBI" id="CHEBI:29101"/>
        <note>structural</note>
    </ligand>
</feature>
<feature type="binding site" evidence="1">
    <location>
        <position position="83"/>
    </location>
    <ligand>
        <name>Na(+)</name>
        <dbReference type="ChEBI" id="CHEBI:29101"/>
        <note>structural</note>
    </ligand>
</feature>
<gene>
    <name evidence="1" type="primary">fluC</name>
    <name evidence="1" type="synonym">crcB</name>
    <name type="ordered locus">Tcr_0767</name>
</gene>